<comment type="function">
    <text evidence="1">Required for maturation of 30S ribosomal subunits.</text>
</comment>
<comment type="subcellular location">
    <subcellularLocation>
        <location evidence="1">Cytoplasm</location>
    </subcellularLocation>
</comment>
<comment type="similarity">
    <text evidence="1">Belongs to the RimP family.</text>
</comment>
<gene>
    <name evidence="1" type="primary">rimP</name>
    <name type="ordered locus">Shewmr4_1024</name>
</gene>
<protein>
    <recommendedName>
        <fullName evidence="1">Ribosome maturation factor RimP</fullName>
    </recommendedName>
</protein>
<evidence type="ECO:0000255" key="1">
    <source>
        <dbReference type="HAMAP-Rule" id="MF_01077"/>
    </source>
</evidence>
<proteinExistence type="inferred from homology"/>
<organism>
    <name type="scientific">Shewanella sp. (strain MR-4)</name>
    <dbReference type="NCBI Taxonomy" id="60480"/>
    <lineage>
        <taxon>Bacteria</taxon>
        <taxon>Pseudomonadati</taxon>
        <taxon>Pseudomonadota</taxon>
        <taxon>Gammaproteobacteria</taxon>
        <taxon>Alteromonadales</taxon>
        <taxon>Shewanellaceae</taxon>
        <taxon>Shewanella</taxon>
    </lineage>
</organism>
<reference key="1">
    <citation type="submission" date="2006-08" db="EMBL/GenBank/DDBJ databases">
        <title>Complete sequence of Shewanella sp. MR-4.</title>
        <authorList>
            <consortium name="US DOE Joint Genome Institute"/>
            <person name="Copeland A."/>
            <person name="Lucas S."/>
            <person name="Lapidus A."/>
            <person name="Barry K."/>
            <person name="Detter J.C."/>
            <person name="Glavina del Rio T."/>
            <person name="Hammon N."/>
            <person name="Israni S."/>
            <person name="Dalin E."/>
            <person name="Tice H."/>
            <person name="Pitluck S."/>
            <person name="Kiss H."/>
            <person name="Brettin T."/>
            <person name="Bruce D."/>
            <person name="Han C."/>
            <person name="Tapia R."/>
            <person name="Gilna P."/>
            <person name="Schmutz J."/>
            <person name="Larimer F."/>
            <person name="Land M."/>
            <person name="Hauser L."/>
            <person name="Kyrpides N."/>
            <person name="Mikhailova N."/>
            <person name="Nealson K."/>
            <person name="Konstantinidis K."/>
            <person name="Klappenbach J."/>
            <person name="Tiedje J."/>
            <person name="Richardson P."/>
        </authorList>
    </citation>
    <scope>NUCLEOTIDE SEQUENCE [LARGE SCALE GENOMIC DNA]</scope>
    <source>
        <strain>MR-4</strain>
    </source>
</reference>
<keyword id="KW-0963">Cytoplasm</keyword>
<keyword id="KW-0690">Ribosome biogenesis</keyword>
<name>RIMP_SHESM</name>
<feature type="chain" id="PRO_1000064772" description="Ribosome maturation factor RimP">
    <location>
        <begin position="1"/>
        <end position="151"/>
    </location>
</feature>
<accession>Q0HLG3</accession>
<sequence>MATLESRLVDMLTVPVEALGFQLWGIEYVQAGKHSILRVFIDGENGINIEDCANVSRQVSAVLDVEDPISTEYTLEVSSPGVDRPLFTAEQYAAYVGEDVKLQLTMPVAGSRNLKGAITQVDGQMLSLNVNGKELVVALDNIRKGNIIAKF</sequence>
<dbReference type="EMBL" id="CP000446">
    <property type="protein sequence ID" value="ABI38104.1"/>
    <property type="molecule type" value="Genomic_DNA"/>
</dbReference>
<dbReference type="RefSeq" id="WP_011621815.1">
    <property type="nucleotide sequence ID" value="NC_008321.1"/>
</dbReference>
<dbReference type="SMR" id="Q0HLG3"/>
<dbReference type="KEGG" id="she:Shewmr4_1024"/>
<dbReference type="HOGENOM" id="CLU_070525_1_1_6"/>
<dbReference type="GO" id="GO:0005829">
    <property type="term" value="C:cytosol"/>
    <property type="evidence" value="ECO:0007669"/>
    <property type="project" value="TreeGrafter"/>
</dbReference>
<dbReference type="GO" id="GO:0000028">
    <property type="term" value="P:ribosomal small subunit assembly"/>
    <property type="evidence" value="ECO:0007669"/>
    <property type="project" value="TreeGrafter"/>
</dbReference>
<dbReference type="GO" id="GO:0006412">
    <property type="term" value="P:translation"/>
    <property type="evidence" value="ECO:0007669"/>
    <property type="project" value="TreeGrafter"/>
</dbReference>
<dbReference type="CDD" id="cd01734">
    <property type="entry name" value="YlxS_C"/>
    <property type="match status" value="1"/>
</dbReference>
<dbReference type="FunFam" id="2.30.30.180:FF:000001">
    <property type="entry name" value="Ribosome maturation factor RimP"/>
    <property type="match status" value="1"/>
</dbReference>
<dbReference type="FunFam" id="3.30.300.70:FF:000001">
    <property type="entry name" value="Ribosome maturation factor RimP"/>
    <property type="match status" value="1"/>
</dbReference>
<dbReference type="Gene3D" id="2.30.30.180">
    <property type="entry name" value="Ribosome maturation factor RimP, C-terminal domain"/>
    <property type="match status" value="1"/>
</dbReference>
<dbReference type="Gene3D" id="3.30.300.70">
    <property type="entry name" value="RimP-like superfamily, N-terminal"/>
    <property type="match status" value="1"/>
</dbReference>
<dbReference type="HAMAP" id="MF_01077">
    <property type="entry name" value="RimP"/>
    <property type="match status" value="1"/>
</dbReference>
<dbReference type="InterPro" id="IPR003728">
    <property type="entry name" value="Ribosome_maturation_RimP"/>
</dbReference>
<dbReference type="InterPro" id="IPR028998">
    <property type="entry name" value="RimP_C"/>
</dbReference>
<dbReference type="InterPro" id="IPR036847">
    <property type="entry name" value="RimP_C_sf"/>
</dbReference>
<dbReference type="InterPro" id="IPR028989">
    <property type="entry name" value="RimP_N"/>
</dbReference>
<dbReference type="InterPro" id="IPR035956">
    <property type="entry name" value="RimP_N_sf"/>
</dbReference>
<dbReference type="NCBIfam" id="NF000927">
    <property type="entry name" value="PRK00092.1-1"/>
    <property type="match status" value="1"/>
</dbReference>
<dbReference type="PANTHER" id="PTHR33867">
    <property type="entry name" value="RIBOSOME MATURATION FACTOR RIMP"/>
    <property type="match status" value="1"/>
</dbReference>
<dbReference type="PANTHER" id="PTHR33867:SF1">
    <property type="entry name" value="RIBOSOME MATURATION FACTOR RIMP"/>
    <property type="match status" value="1"/>
</dbReference>
<dbReference type="Pfam" id="PF17384">
    <property type="entry name" value="DUF150_C"/>
    <property type="match status" value="1"/>
</dbReference>
<dbReference type="Pfam" id="PF02576">
    <property type="entry name" value="RimP_N"/>
    <property type="match status" value="1"/>
</dbReference>
<dbReference type="SUPFAM" id="SSF74942">
    <property type="entry name" value="YhbC-like, C-terminal domain"/>
    <property type="match status" value="1"/>
</dbReference>
<dbReference type="SUPFAM" id="SSF75420">
    <property type="entry name" value="YhbC-like, N-terminal domain"/>
    <property type="match status" value="1"/>
</dbReference>